<feature type="chain" id="PRO_0000352108" description="Small ribosomal subunit protein uS2c">
    <location>
        <begin position="1"/>
        <end position="236"/>
    </location>
</feature>
<accession>A8W3H9</accession>
<sequence>MKKKYWNIKLEDMLEARVHLGHSTQNWNPKMAPYISAKRKGIHIINLTRTARFLSEACDLVFYAASKGKKFLIVGTNNAADEAVARASKRARCHYVNKKWLGGMLTNWSTTETRLQKFRDLRMEQKKGGLNNLPKKEATMLKRKLARLQKYLGGIQYMTGLPDIVIIIDQHKEYTALQECRTLGIPTISLIDTNCDPNLSDIAIPANDDAMASIRFILNKLVFAICQGYFSQLRKP</sequence>
<keyword id="KW-0934">Plastid</keyword>
<keyword id="KW-0687">Ribonucleoprotein</keyword>
<keyword id="KW-0689">Ribosomal protein</keyword>
<gene>
    <name type="primary">rps2</name>
</gene>
<evidence type="ECO:0000305" key="1"/>
<proteinExistence type="inferred from homology"/>
<protein>
    <recommendedName>
        <fullName evidence="1">Small ribosomal subunit protein uS2c</fullName>
    </recommendedName>
    <alternativeName>
        <fullName>Plastid 30S ribosomal protein S2</fullName>
    </alternativeName>
</protein>
<geneLocation type="plastid"/>
<comment type="subcellular location">
    <subcellularLocation>
        <location>Plastid</location>
    </subcellularLocation>
</comment>
<comment type="similarity">
    <text evidence="1">Belongs to the universal ribosomal protein uS2 family.</text>
</comment>
<dbReference type="EMBL" id="EU189133">
    <property type="protein sequence ID" value="ABW20554.1"/>
    <property type="molecule type" value="Genomic_DNA"/>
</dbReference>
<dbReference type="RefSeq" id="YP_001531209.1">
    <property type="nucleotide sequence ID" value="NC_009949.1"/>
</dbReference>
<dbReference type="SMR" id="A8W3H9"/>
<dbReference type="GeneID" id="5714828"/>
<dbReference type="GO" id="GO:0005763">
    <property type="term" value="C:mitochondrial small ribosomal subunit"/>
    <property type="evidence" value="ECO:0007669"/>
    <property type="project" value="TreeGrafter"/>
</dbReference>
<dbReference type="GO" id="GO:0009536">
    <property type="term" value="C:plastid"/>
    <property type="evidence" value="ECO:0007669"/>
    <property type="project" value="UniProtKB-SubCell"/>
</dbReference>
<dbReference type="GO" id="GO:0003735">
    <property type="term" value="F:structural constituent of ribosome"/>
    <property type="evidence" value="ECO:0007669"/>
    <property type="project" value="InterPro"/>
</dbReference>
<dbReference type="GO" id="GO:0006412">
    <property type="term" value="P:translation"/>
    <property type="evidence" value="ECO:0007669"/>
    <property type="project" value="InterPro"/>
</dbReference>
<dbReference type="CDD" id="cd01425">
    <property type="entry name" value="RPS2"/>
    <property type="match status" value="1"/>
</dbReference>
<dbReference type="FunFam" id="1.10.287.610:FF:000001">
    <property type="entry name" value="30S ribosomal protein S2"/>
    <property type="match status" value="1"/>
</dbReference>
<dbReference type="Gene3D" id="3.40.50.10490">
    <property type="entry name" value="Glucose-6-phosphate isomerase like protein, domain 1"/>
    <property type="match status" value="1"/>
</dbReference>
<dbReference type="Gene3D" id="1.10.287.610">
    <property type="entry name" value="Helix hairpin bin"/>
    <property type="match status" value="1"/>
</dbReference>
<dbReference type="HAMAP" id="MF_00291_B">
    <property type="entry name" value="Ribosomal_uS2_B"/>
    <property type="match status" value="1"/>
</dbReference>
<dbReference type="InterPro" id="IPR001865">
    <property type="entry name" value="Ribosomal_uS2"/>
</dbReference>
<dbReference type="InterPro" id="IPR005706">
    <property type="entry name" value="Ribosomal_uS2_bac/mit/plastid"/>
</dbReference>
<dbReference type="InterPro" id="IPR018130">
    <property type="entry name" value="Ribosomal_uS2_CS"/>
</dbReference>
<dbReference type="InterPro" id="IPR023591">
    <property type="entry name" value="Ribosomal_uS2_flav_dom_sf"/>
</dbReference>
<dbReference type="NCBIfam" id="TIGR01011">
    <property type="entry name" value="rpsB_bact"/>
    <property type="match status" value="1"/>
</dbReference>
<dbReference type="PANTHER" id="PTHR12534">
    <property type="entry name" value="30S RIBOSOMAL PROTEIN S2 PROKARYOTIC AND ORGANELLAR"/>
    <property type="match status" value="1"/>
</dbReference>
<dbReference type="PANTHER" id="PTHR12534:SF0">
    <property type="entry name" value="SMALL RIBOSOMAL SUBUNIT PROTEIN US2M"/>
    <property type="match status" value="1"/>
</dbReference>
<dbReference type="Pfam" id="PF00318">
    <property type="entry name" value="Ribosomal_S2"/>
    <property type="match status" value="1"/>
</dbReference>
<dbReference type="PRINTS" id="PR00395">
    <property type="entry name" value="RIBOSOMALS2"/>
</dbReference>
<dbReference type="SUPFAM" id="SSF52313">
    <property type="entry name" value="Ribosomal protein S2"/>
    <property type="match status" value="1"/>
</dbReference>
<dbReference type="PROSITE" id="PS00962">
    <property type="entry name" value="RIBOSOMAL_S2_1"/>
    <property type="match status" value="1"/>
</dbReference>
<dbReference type="PROSITE" id="PS00963">
    <property type="entry name" value="RIBOSOMAL_S2_2"/>
    <property type="match status" value="1"/>
</dbReference>
<organism>
    <name type="scientific">Cuscuta obtusiflora</name>
    <name type="common">Peruvian dodder</name>
    <dbReference type="NCBI Taxonomy" id="437280"/>
    <lineage>
        <taxon>Eukaryota</taxon>
        <taxon>Viridiplantae</taxon>
        <taxon>Streptophyta</taxon>
        <taxon>Embryophyta</taxon>
        <taxon>Tracheophyta</taxon>
        <taxon>Spermatophyta</taxon>
        <taxon>Magnoliopsida</taxon>
        <taxon>eudicotyledons</taxon>
        <taxon>Gunneridae</taxon>
        <taxon>Pentapetalae</taxon>
        <taxon>asterids</taxon>
        <taxon>lamiids</taxon>
        <taxon>Solanales</taxon>
        <taxon>Convolvulaceae</taxon>
        <taxon>Cuscuteae</taxon>
        <taxon>Cuscuta</taxon>
        <taxon>Cuscuta subgen. Grammica</taxon>
        <taxon>Cuscuta sect. Cleistogrammica</taxon>
    </lineage>
</organism>
<name>RR2_CUSOB</name>
<reference key="1">
    <citation type="journal article" date="2007" name="BMC Plant Biol.">
        <title>Complete plastid genome sequences suggest strong selection for retention of photosynthetic genes in the parasitic plant genus Cuscuta.</title>
        <authorList>
            <person name="McNeal J.R."/>
            <person name="Kuehl J.V."/>
            <person name="Boore J.L."/>
            <person name="dePamphilis C.W."/>
        </authorList>
    </citation>
    <scope>NUCLEOTIDE SEQUENCE [LARGE SCALE GENOMIC DNA]</scope>
</reference>